<keyword id="KW-0240">DNA-directed RNA polymerase</keyword>
<keyword id="KW-0460">Magnesium</keyword>
<keyword id="KW-0479">Metal-binding</keyword>
<keyword id="KW-0548">Nucleotidyltransferase</keyword>
<keyword id="KW-0934">Plastid</keyword>
<keyword id="KW-0804">Transcription</keyword>
<keyword id="KW-0808">Transferase</keyword>
<keyword id="KW-0862">Zinc</keyword>
<comment type="function">
    <text evidence="1">DNA-dependent RNA polymerase catalyzes the transcription of DNA into RNA using the four ribonucleoside triphosphates as substrates.</text>
</comment>
<comment type="catalytic activity">
    <reaction evidence="1">
        <text>RNA(n) + a ribonucleoside 5'-triphosphate = RNA(n+1) + diphosphate</text>
        <dbReference type="Rhea" id="RHEA:21248"/>
        <dbReference type="Rhea" id="RHEA-COMP:14527"/>
        <dbReference type="Rhea" id="RHEA-COMP:17342"/>
        <dbReference type="ChEBI" id="CHEBI:33019"/>
        <dbReference type="ChEBI" id="CHEBI:61557"/>
        <dbReference type="ChEBI" id="CHEBI:140395"/>
        <dbReference type="EC" id="2.7.7.6"/>
    </reaction>
</comment>
<comment type="cofactor">
    <cofactor evidence="1">
        <name>Mg(2+)</name>
        <dbReference type="ChEBI" id="CHEBI:18420"/>
    </cofactor>
    <text evidence="1">Binds 1 Mg(2+) ion per subunit.</text>
</comment>
<comment type="cofactor">
    <cofactor evidence="1">
        <name>Zn(2+)</name>
        <dbReference type="ChEBI" id="CHEBI:29105"/>
    </cofactor>
    <text evidence="1">Binds 1 Zn(2+) ion per subunit.</text>
</comment>
<comment type="subcellular location">
    <subcellularLocation>
        <location>Plastid</location>
    </subcellularLocation>
</comment>
<comment type="similarity">
    <text evidence="1">Belongs to the RNA polymerase beta' chain family. RpoC1 subfamily.</text>
</comment>
<comment type="caution">
    <text evidence="2">Young tissue from this organism is photosynthetic and contains some thylakoids, although the photosynthetic activity does not exceed the light compensation point.</text>
</comment>
<accession>A8W3B5</accession>
<geneLocation type="plastid"/>
<reference key="1">
    <citation type="journal article" date="2007" name="BMC Plant Biol.">
        <title>Complete plastid genome sequences suggest strong selection for retention of photosynthetic genes in the parasitic plant genus Cuscuta.</title>
        <authorList>
            <person name="McNeal J.R."/>
            <person name="Kuehl J.V."/>
            <person name="Boore J.L."/>
            <person name="dePamphilis C.W."/>
        </authorList>
    </citation>
    <scope>NUCLEOTIDE SEQUENCE [LARGE SCALE GENOMIC DNA]</scope>
</reference>
<gene>
    <name evidence="1" type="primary">rpoC1</name>
</gene>
<evidence type="ECO:0000255" key="1">
    <source>
        <dbReference type="HAMAP-Rule" id="MF_01323"/>
    </source>
</evidence>
<evidence type="ECO:0000305" key="2"/>
<protein>
    <recommendedName>
        <fullName evidence="1">DNA-directed RNA polymerase subunit beta'</fullName>
        <ecNumber evidence="1">2.7.7.6</ecNumber>
    </recommendedName>
    <alternativeName>
        <fullName evidence="1">PEP</fullName>
    </alternativeName>
    <alternativeName>
        <fullName evidence="1">Plastid-encoded RNA polymerase subunit beta'</fullName>
        <shortName evidence="1">RNA polymerase subunit beta'</shortName>
    </alternativeName>
</protein>
<sequence length="691" mass="79536">MNNNFSSMIDRYKHQQLQIGSVSPQQISAWATKILPNGEIVGEVKKPYTFLYKTNKPEKEGLFCERIFGPIKSGICACGNYRVIGDEKEEQKFCEQCGVEFVDSRIRRYRMGCIKLACPVTHVWYLKRLPSYIANILDKPLKELEGLVYCDFSFARPITNKPTFLRLRGLLKYEIQSWKSSIPLFFTTQGFDTFRNREISTGAGAIREQLADLDLRILLENSLLEWKDLGEEENTGNEWEDRKAGRRKGFLVRRMELVKHFIRTNIEPKWMVLCLLPVLPPELRPIIQIDGGKLMSSDINELYRRVIYRNNTLTDLLTTSRSTPGELVMCQEKLVQEAVDTLLDNGIRGQPMRDGHNKVYKSFSDIIEGKEGRFRETLLGKRVDYSGRSVIVVGPSLSLHQCGLPREIAIELFQPFVIRDLIKQHLASNIGVAKSKIREKEPIIWEILQDVMQGHPVLLNRAPTLHRLGIQAFQPVLVEGRVICLHPLVCKGFNADFDGDQMAVHVPLSLEAQAEARLLMFSHMNLLSPAIGDPISVPTQDMLIGLYVLTSEKHRGICTNRYTNCNIRTLQTKSSDYSNSKYKNPYNNGPFFCNSYDAIGAYRQKRINLESPLWLRWRLDRRVITSRETPIEVHYESRGTYFEIYGHFLIVRSLKKKILFIYLRTTVGHISLYREIEEAIQGFSRAWSSDT</sequence>
<name>RPOC1_CUSEX</name>
<organism>
    <name type="scientific">Cuscuta exaltata</name>
    <name type="common">Tall dodder</name>
    <dbReference type="NCBI Taxonomy" id="476139"/>
    <lineage>
        <taxon>Eukaryota</taxon>
        <taxon>Viridiplantae</taxon>
        <taxon>Streptophyta</taxon>
        <taxon>Embryophyta</taxon>
        <taxon>Tracheophyta</taxon>
        <taxon>Spermatophyta</taxon>
        <taxon>Magnoliopsida</taxon>
        <taxon>eudicotyledons</taxon>
        <taxon>Gunneridae</taxon>
        <taxon>Pentapetalae</taxon>
        <taxon>asterids</taxon>
        <taxon>lamiids</taxon>
        <taxon>Solanales</taxon>
        <taxon>Convolvulaceae</taxon>
        <taxon>Cuscuteae</taxon>
        <taxon>Cuscuta</taxon>
        <taxon>Cuscuta subgen. Monogynella</taxon>
    </lineage>
</organism>
<dbReference type="EC" id="2.7.7.6" evidence="1"/>
<dbReference type="EMBL" id="EU189132">
    <property type="protein sequence ID" value="ABW83686.1"/>
    <property type="molecule type" value="Genomic_DNA"/>
</dbReference>
<dbReference type="RefSeq" id="YP_001542522.1">
    <property type="nucleotide sequence ID" value="NC_009963.1"/>
</dbReference>
<dbReference type="SMR" id="A8W3B5"/>
<dbReference type="GeneID" id="5729679"/>
<dbReference type="GO" id="GO:0000428">
    <property type="term" value="C:DNA-directed RNA polymerase complex"/>
    <property type="evidence" value="ECO:0007669"/>
    <property type="project" value="UniProtKB-KW"/>
</dbReference>
<dbReference type="GO" id="GO:0005739">
    <property type="term" value="C:mitochondrion"/>
    <property type="evidence" value="ECO:0007669"/>
    <property type="project" value="GOC"/>
</dbReference>
<dbReference type="GO" id="GO:0009536">
    <property type="term" value="C:plastid"/>
    <property type="evidence" value="ECO:0007669"/>
    <property type="project" value="UniProtKB-SubCell"/>
</dbReference>
<dbReference type="GO" id="GO:0003677">
    <property type="term" value="F:DNA binding"/>
    <property type="evidence" value="ECO:0007669"/>
    <property type="project" value="UniProtKB-UniRule"/>
</dbReference>
<dbReference type="GO" id="GO:0003899">
    <property type="term" value="F:DNA-directed RNA polymerase activity"/>
    <property type="evidence" value="ECO:0007669"/>
    <property type="project" value="UniProtKB-UniRule"/>
</dbReference>
<dbReference type="GO" id="GO:0000287">
    <property type="term" value="F:magnesium ion binding"/>
    <property type="evidence" value="ECO:0007669"/>
    <property type="project" value="UniProtKB-UniRule"/>
</dbReference>
<dbReference type="GO" id="GO:0008270">
    <property type="term" value="F:zinc ion binding"/>
    <property type="evidence" value="ECO:0007669"/>
    <property type="project" value="UniProtKB-UniRule"/>
</dbReference>
<dbReference type="GO" id="GO:0006351">
    <property type="term" value="P:DNA-templated transcription"/>
    <property type="evidence" value="ECO:0007669"/>
    <property type="project" value="UniProtKB-UniRule"/>
</dbReference>
<dbReference type="Gene3D" id="1.10.40.90">
    <property type="match status" value="1"/>
</dbReference>
<dbReference type="Gene3D" id="2.40.40.20">
    <property type="match status" value="1"/>
</dbReference>
<dbReference type="Gene3D" id="4.10.860.120">
    <property type="entry name" value="RNA polymerase II, clamp domain"/>
    <property type="match status" value="1"/>
</dbReference>
<dbReference type="Gene3D" id="1.10.274.100">
    <property type="entry name" value="RNA polymerase Rpb1, domain 3"/>
    <property type="match status" value="1"/>
</dbReference>
<dbReference type="HAMAP" id="MF_01323">
    <property type="entry name" value="RNApol_bact_RpoC1"/>
    <property type="match status" value="1"/>
</dbReference>
<dbReference type="InterPro" id="IPR045867">
    <property type="entry name" value="DNA-dir_RpoC_beta_prime"/>
</dbReference>
<dbReference type="InterPro" id="IPR000722">
    <property type="entry name" value="RNA_pol_asu"/>
</dbReference>
<dbReference type="InterPro" id="IPR006592">
    <property type="entry name" value="RNA_pol_N"/>
</dbReference>
<dbReference type="InterPro" id="IPR007080">
    <property type="entry name" value="RNA_pol_Rpb1_1"/>
</dbReference>
<dbReference type="InterPro" id="IPR007066">
    <property type="entry name" value="RNA_pol_Rpb1_3"/>
</dbReference>
<dbReference type="InterPro" id="IPR042102">
    <property type="entry name" value="RNA_pol_Rpb1_3_sf"/>
</dbReference>
<dbReference type="InterPro" id="IPR044893">
    <property type="entry name" value="RNA_pol_Rpb1_clamp_domain"/>
</dbReference>
<dbReference type="InterPro" id="IPR034678">
    <property type="entry name" value="RNApol_RpoC1"/>
</dbReference>
<dbReference type="PANTHER" id="PTHR19376">
    <property type="entry name" value="DNA-DIRECTED RNA POLYMERASE"/>
    <property type="match status" value="1"/>
</dbReference>
<dbReference type="PANTHER" id="PTHR19376:SF54">
    <property type="entry name" value="DNA-DIRECTED RNA POLYMERASE SUBUNIT BETA"/>
    <property type="match status" value="1"/>
</dbReference>
<dbReference type="Pfam" id="PF04997">
    <property type="entry name" value="RNA_pol_Rpb1_1"/>
    <property type="match status" value="1"/>
</dbReference>
<dbReference type="Pfam" id="PF00623">
    <property type="entry name" value="RNA_pol_Rpb1_2"/>
    <property type="match status" value="1"/>
</dbReference>
<dbReference type="Pfam" id="PF04983">
    <property type="entry name" value="RNA_pol_Rpb1_3"/>
    <property type="match status" value="1"/>
</dbReference>
<dbReference type="SMART" id="SM00663">
    <property type="entry name" value="RPOLA_N"/>
    <property type="match status" value="1"/>
</dbReference>
<dbReference type="SUPFAM" id="SSF64484">
    <property type="entry name" value="beta and beta-prime subunits of DNA dependent RNA-polymerase"/>
    <property type="match status" value="1"/>
</dbReference>
<proteinExistence type="inferred from homology"/>
<feature type="chain" id="PRO_0000353485" description="DNA-directed RNA polymerase subunit beta'">
    <location>
        <begin position="1"/>
        <end position="691"/>
    </location>
</feature>
<feature type="binding site" evidence="1">
    <location>
        <position position="76"/>
    </location>
    <ligand>
        <name>Zn(2+)</name>
        <dbReference type="ChEBI" id="CHEBI:29105"/>
    </ligand>
</feature>
<feature type="binding site" evidence="1">
    <location>
        <position position="78"/>
    </location>
    <ligand>
        <name>Zn(2+)</name>
        <dbReference type="ChEBI" id="CHEBI:29105"/>
    </ligand>
</feature>
<feature type="binding site" evidence="1">
    <location>
        <position position="94"/>
    </location>
    <ligand>
        <name>Zn(2+)</name>
        <dbReference type="ChEBI" id="CHEBI:29105"/>
    </ligand>
</feature>
<feature type="binding site" evidence="1">
    <location>
        <position position="97"/>
    </location>
    <ligand>
        <name>Zn(2+)</name>
        <dbReference type="ChEBI" id="CHEBI:29105"/>
    </ligand>
</feature>
<feature type="binding site" evidence="1">
    <location>
        <position position="496"/>
    </location>
    <ligand>
        <name>Mg(2+)</name>
        <dbReference type="ChEBI" id="CHEBI:18420"/>
    </ligand>
</feature>
<feature type="binding site" evidence="1">
    <location>
        <position position="498"/>
    </location>
    <ligand>
        <name>Mg(2+)</name>
        <dbReference type="ChEBI" id="CHEBI:18420"/>
    </ligand>
</feature>
<feature type="binding site" evidence="1">
    <location>
        <position position="500"/>
    </location>
    <ligand>
        <name>Mg(2+)</name>
        <dbReference type="ChEBI" id="CHEBI:18420"/>
    </ligand>
</feature>